<proteinExistence type="inferred from homology"/>
<gene>
    <name evidence="1" type="primary">tsf</name>
    <name type="ordered locus">Tcr_1284</name>
</gene>
<comment type="function">
    <text evidence="1">Associates with the EF-Tu.GDP complex and induces the exchange of GDP to GTP. It remains bound to the aminoacyl-tRNA.EF-Tu.GTP complex up to the GTP hydrolysis stage on the ribosome.</text>
</comment>
<comment type="subcellular location">
    <subcellularLocation>
        <location evidence="1">Cytoplasm</location>
    </subcellularLocation>
</comment>
<comment type="similarity">
    <text evidence="1">Belongs to the EF-Ts family.</text>
</comment>
<feature type="chain" id="PRO_0000241547" description="Elongation factor Ts">
    <location>
        <begin position="1"/>
        <end position="294"/>
    </location>
</feature>
<feature type="region of interest" description="Involved in Mg(2+) ion dislocation from EF-Tu" evidence="1">
    <location>
        <begin position="81"/>
        <end position="84"/>
    </location>
</feature>
<accession>Q31G44</accession>
<name>EFTS_HYDCU</name>
<organism>
    <name type="scientific">Hydrogenovibrio crunogenus (strain DSM 25203 / XCL-2)</name>
    <name type="common">Thiomicrospira crunogena</name>
    <dbReference type="NCBI Taxonomy" id="317025"/>
    <lineage>
        <taxon>Bacteria</taxon>
        <taxon>Pseudomonadati</taxon>
        <taxon>Pseudomonadota</taxon>
        <taxon>Gammaproteobacteria</taxon>
        <taxon>Thiotrichales</taxon>
        <taxon>Piscirickettsiaceae</taxon>
        <taxon>Hydrogenovibrio</taxon>
    </lineage>
</organism>
<reference key="1">
    <citation type="journal article" date="2006" name="PLoS Biol.">
        <title>The genome of deep-sea vent chemolithoautotroph Thiomicrospira crunogena XCL-2.</title>
        <authorList>
            <person name="Scott K.M."/>
            <person name="Sievert S.M."/>
            <person name="Abril F.N."/>
            <person name="Ball L.A."/>
            <person name="Barrett C.J."/>
            <person name="Blake R.A."/>
            <person name="Boller A.J."/>
            <person name="Chain P.S.G."/>
            <person name="Clark J.A."/>
            <person name="Davis C.R."/>
            <person name="Detter C."/>
            <person name="Do K.F."/>
            <person name="Dobrinski K.P."/>
            <person name="Faza B.I."/>
            <person name="Fitzpatrick K.A."/>
            <person name="Freyermuth S.K."/>
            <person name="Harmer T.L."/>
            <person name="Hauser L.J."/>
            <person name="Huegler M."/>
            <person name="Kerfeld C.A."/>
            <person name="Klotz M.G."/>
            <person name="Kong W.W."/>
            <person name="Land M."/>
            <person name="Lapidus A."/>
            <person name="Larimer F.W."/>
            <person name="Longo D.L."/>
            <person name="Lucas S."/>
            <person name="Malfatti S.A."/>
            <person name="Massey S.E."/>
            <person name="Martin D.D."/>
            <person name="McCuddin Z."/>
            <person name="Meyer F."/>
            <person name="Moore J.L."/>
            <person name="Ocampo L.H. Jr."/>
            <person name="Paul J.H."/>
            <person name="Paulsen I.T."/>
            <person name="Reep D.K."/>
            <person name="Ren Q."/>
            <person name="Ross R.L."/>
            <person name="Sato P.Y."/>
            <person name="Thomas P."/>
            <person name="Tinkham L.E."/>
            <person name="Zeruth G.T."/>
        </authorList>
    </citation>
    <scope>NUCLEOTIDE SEQUENCE [LARGE SCALE GENOMIC DNA]</scope>
    <source>
        <strain>DSM 25203 / XCL-2</strain>
    </source>
</reference>
<dbReference type="EMBL" id="CP000109">
    <property type="protein sequence ID" value="ABB41879.1"/>
    <property type="molecule type" value="Genomic_DNA"/>
</dbReference>
<dbReference type="SMR" id="Q31G44"/>
<dbReference type="STRING" id="317025.Tcr_1284"/>
<dbReference type="KEGG" id="tcx:Tcr_1284"/>
<dbReference type="eggNOG" id="COG0264">
    <property type="taxonomic scope" value="Bacteria"/>
</dbReference>
<dbReference type="HOGENOM" id="CLU_047155_0_0_6"/>
<dbReference type="OrthoDB" id="9808348at2"/>
<dbReference type="GO" id="GO:0005737">
    <property type="term" value="C:cytoplasm"/>
    <property type="evidence" value="ECO:0007669"/>
    <property type="project" value="UniProtKB-SubCell"/>
</dbReference>
<dbReference type="GO" id="GO:0003746">
    <property type="term" value="F:translation elongation factor activity"/>
    <property type="evidence" value="ECO:0007669"/>
    <property type="project" value="UniProtKB-UniRule"/>
</dbReference>
<dbReference type="CDD" id="cd14275">
    <property type="entry name" value="UBA_EF-Ts"/>
    <property type="match status" value="1"/>
</dbReference>
<dbReference type="FunFam" id="1.10.286.20:FF:000001">
    <property type="entry name" value="Elongation factor Ts"/>
    <property type="match status" value="1"/>
</dbReference>
<dbReference type="FunFam" id="1.10.8.10:FF:000001">
    <property type="entry name" value="Elongation factor Ts"/>
    <property type="match status" value="1"/>
</dbReference>
<dbReference type="Gene3D" id="1.10.286.20">
    <property type="match status" value="1"/>
</dbReference>
<dbReference type="Gene3D" id="1.10.8.10">
    <property type="entry name" value="DNA helicase RuvA subunit, C-terminal domain"/>
    <property type="match status" value="1"/>
</dbReference>
<dbReference type="Gene3D" id="3.30.479.20">
    <property type="entry name" value="Elongation factor Ts, dimerisation domain"/>
    <property type="match status" value="2"/>
</dbReference>
<dbReference type="HAMAP" id="MF_00050">
    <property type="entry name" value="EF_Ts"/>
    <property type="match status" value="1"/>
</dbReference>
<dbReference type="InterPro" id="IPR036402">
    <property type="entry name" value="EF-Ts_dimer_sf"/>
</dbReference>
<dbReference type="InterPro" id="IPR001816">
    <property type="entry name" value="Transl_elong_EFTs/EF1B"/>
</dbReference>
<dbReference type="InterPro" id="IPR014039">
    <property type="entry name" value="Transl_elong_EFTs/EF1B_dimer"/>
</dbReference>
<dbReference type="InterPro" id="IPR018101">
    <property type="entry name" value="Transl_elong_Ts_CS"/>
</dbReference>
<dbReference type="InterPro" id="IPR009060">
    <property type="entry name" value="UBA-like_sf"/>
</dbReference>
<dbReference type="NCBIfam" id="TIGR00116">
    <property type="entry name" value="tsf"/>
    <property type="match status" value="1"/>
</dbReference>
<dbReference type="PANTHER" id="PTHR11741">
    <property type="entry name" value="ELONGATION FACTOR TS"/>
    <property type="match status" value="1"/>
</dbReference>
<dbReference type="PANTHER" id="PTHR11741:SF0">
    <property type="entry name" value="ELONGATION FACTOR TS, MITOCHONDRIAL"/>
    <property type="match status" value="1"/>
</dbReference>
<dbReference type="Pfam" id="PF00889">
    <property type="entry name" value="EF_TS"/>
    <property type="match status" value="1"/>
</dbReference>
<dbReference type="SUPFAM" id="SSF54713">
    <property type="entry name" value="Elongation factor Ts (EF-Ts), dimerisation domain"/>
    <property type="match status" value="2"/>
</dbReference>
<dbReference type="SUPFAM" id="SSF46934">
    <property type="entry name" value="UBA-like"/>
    <property type="match status" value="1"/>
</dbReference>
<dbReference type="PROSITE" id="PS01126">
    <property type="entry name" value="EF_TS_1"/>
    <property type="match status" value="1"/>
</dbReference>
<dbReference type="PROSITE" id="PS01127">
    <property type="entry name" value="EF_TS_2"/>
    <property type="match status" value="1"/>
</dbReference>
<sequence length="294" mass="31503">MAVTASMVKELREATGAGMMDCKKALAETDGNMEEAIEFLRKKGMAGADKKAGRTAAEGVIAIAVSDDKKKAAIVEVNCETDFVAKGDDFKAFADEIAAIVLATGTVDVDALMNEKMANGQTIDEKRREMIGKIGENMAVRRVELVESNGTIGKYQHGEKIGVVVAMNGGDDALVRDVAMHVAAANPSAISADDVDQEMLEKERKFQIEQAQDSGKPAEIIEKMIDGRMRKYLQEITLLGQAFVKDPDQTVEKLLKASDASVSNFVRLEVGEGIEIEETNFADEVAAAAAAVKG</sequence>
<evidence type="ECO:0000255" key="1">
    <source>
        <dbReference type="HAMAP-Rule" id="MF_00050"/>
    </source>
</evidence>
<protein>
    <recommendedName>
        <fullName evidence="1">Elongation factor Ts</fullName>
        <shortName evidence="1">EF-Ts</shortName>
    </recommendedName>
</protein>
<keyword id="KW-0963">Cytoplasm</keyword>
<keyword id="KW-0251">Elongation factor</keyword>
<keyword id="KW-0648">Protein biosynthesis</keyword>